<gene>
    <name evidence="1" type="primary">hisB</name>
    <name type="ordered locus">Abu_0977</name>
</gene>
<keyword id="KW-0028">Amino-acid biosynthesis</keyword>
<keyword id="KW-0963">Cytoplasm</keyword>
<keyword id="KW-0368">Histidine biosynthesis</keyword>
<keyword id="KW-0456">Lyase</keyword>
<keyword id="KW-1185">Reference proteome</keyword>
<sequence>MVEINRKTKETDIKCKLNLDGCGKININTGVGFFDHMLEALSKHSGIDIDLTCSGDLHIDAHHTVEDCGIVLGQALKKAIFPISAVERYGNATVVMDEAATTCALDLSNRPFLVYEVNVSGKVGDFDVELVEEFFHAVAGNAGLTVHIIQDRGRNKHHILEASFKAFAVALRRALVKNEKLGIPSTKGVL</sequence>
<organism>
    <name type="scientific">Aliarcobacter butzleri (strain RM4018)</name>
    <name type="common">Arcobacter butzleri</name>
    <dbReference type="NCBI Taxonomy" id="367737"/>
    <lineage>
        <taxon>Bacteria</taxon>
        <taxon>Pseudomonadati</taxon>
        <taxon>Campylobacterota</taxon>
        <taxon>Epsilonproteobacteria</taxon>
        <taxon>Campylobacterales</taxon>
        <taxon>Arcobacteraceae</taxon>
        <taxon>Aliarcobacter</taxon>
    </lineage>
</organism>
<evidence type="ECO:0000255" key="1">
    <source>
        <dbReference type="HAMAP-Rule" id="MF_00076"/>
    </source>
</evidence>
<comment type="catalytic activity">
    <reaction evidence="1">
        <text>D-erythro-1-(imidazol-4-yl)glycerol 3-phosphate = 3-(imidazol-4-yl)-2-oxopropyl phosphate + H2O</text>
        <dbReference type="Rhea" id="RHEA:11040"/>
        <dbReference type="ChEBI" id="CHEBI:15377"/>
        <dbReference type="ChEBI" id="CHEBI:57766"/>
        <dbReference type="ChEBI" id="CHEBI:58278"/>
        <dbReference type="EC" id="4.2.1.19"/>
    </reaction>
</comment>
<comment type="pathway">
    <text evidence="1">Amino-acid biosynthesis; L-histidine biosynthesis; L-histidine from 5-phospho-alpha-D-ribose 1-diphosphate: step 6/9.</text>
</comment>
<comment type="subcellular location">
    <subcellularLocation>
        <location evidence="1">Cytoplasm</location>
    </subcellularLocation>
</comment>
<comment type="similarity">
    <text evidence="1">Belongs to the imidazoleglycerol-phosphate dehydratase family.</text>
</comment>
<accession>A8ETG3</accession>
<protein>
    <recommendedName>
        <fullName evidence="1">Imidazoleglycerol-phosphate dehydratase</fullName>
        <shortName evidence="1">IGPD</shortName>
        <ecNumber evidence="1">4.2.1.19</ecNumber>
    </recommendedName>
</protein>
<reference key="1">
    <citation type="journal article" date="2007" name="PLoS ONE">
        <title>The complete genome sequence and analysis of the Epsilonproteobacterium Arcobacter butzleri.</title>
        <authorList>
            <person name="Miller W.G."/>
            <person name="Parker C.T."/>
            <person name="Rubenfield M."/>
            <person name="Mendz G.L."/>
            <person name="Woesten M.M.S.M."/>
            <person name="Ussery D.W."/>
            <person name="Stolz J.F."/>
            <person name="Binnewies T.T."/>
            <person name="Hallin P.F."/>
            <person name="Wang G."/>
            <person name="Malek J.A."/>
            <person name="Rogosin A."/>
            <person name="Stanker L.H."/>
            <person name="Mandrell R.E."/>
        </authorList>
    </citation>
    <scope>NUCLEOTIDE SEQUENCE [LARGE SCALE GENOMIC DNA]</scope>
    <source>
        <strain>RM4018</strain>
    </source>
</reference>
<name>HIS7_ALIB4</name>
<dbReference type="EC" id="4.2.1.19" evidence="1"/>
<dbReference type="EMBL" id="CP000361">
    <property type="protein sequence ID" value="ABV67237.1"/>
    <property type="molecule type" value="Genomic_DNA"/>
</dbReference>
<dbReference type="RefSeq" id="WP_004509164.1">
    <property type="nucleotide sequence ID" value="NC_009850.1"/>
</dbReference>
<dbReference type="SMR" id="A8ETG3"/>
<dbReference type="STRING" id="367737.Abu_0977"/>
<dbReference type="GeneID" id="24303500"/>
<dbReference type="KEGG" id="abu:Abu_0977"/>
<dbReference type="eggNOG" id="COG0131">
    <property type="taxonomic scope" value="Bacteria"/>
</dbReference>
<dbReference type="HOGENOM" id="CLU_044308_3_0_7"/>
<dbReference type="UniPathway" id="UPA00031">
    <property type="reaction ID" value="UER00011"/>
</dbReference>
<dbReference type="Proteomes" id="UP000001136">
    <property type="component" value="Chromosome"/>
</dbReference>
<dbReference type="GO" id="GO:0005737">
    <property type="term" value="C:cytoplasm"/>
    <property type="evidence" value="ECO:0007669"/>
    <property type="project" value="UniProtKB-SubCell"/>
</dbReference>
<dbReference type="GO" id="GO:0004424">
    <property type="term" value="F:imidazoleglycerol-phosphate dehydratase activity"/>
    <property type="evidence" value="ECO:0007669"/>
    <property type="project" value="UniProtKB-UniRule"/>
</dbReference>
<dbReference type="GO" id="GO:0000105">
    <property type="term" value="P:L-histidine biosynthetic process"/>
    <property type="evidence" value="ECO:0007669"/>
    <property type="project" value="UniProtKB-UniRule"/>
</dbReference>
<dbReference type="CDD" id="cd07914">
    <property type="entry name" value="IGPD"/>
    <property type="match status" value="1"/>
</dbReference>
<dbReference type="FunFam" id="3.30.230.40:FF:000001">
    <property type="entry name" value="Imidazoleglycerol-phosphate dehydratase HisB"/>
    <property type="match status" value="1"/>
</dbReference>
<dbReference type="FunFam" id="3.30.230.40:FF:000003">
    <property type="entry name" value="Imidazoleglycerol-phosphate dehydratase HisB"/>
    <property type="match status" value="1"/>
</dbReference>
<dbReference type="Gene3D" id="3.30.230.40">
    <property type="entry name" value="Imidazole glycerol phosphate dehydratase, domain 1"/>
    <property type="match status" value="2"/>
</dbReference>
<dbReference type="HAMAP" id="MF_00076">
    <property type="entry name" value="HisB"/>
    <property type="match status" value="1"/>
</dbReference>
<dbReference type="InterPro" id="IPR038494">
    <property type="entry name" value="IGPD_sf"/>
</dbReference>
<dbReference type="InterPro" id="IPR000807">
    <property type="entry name" value="ImidazoleglycerolP_deHydtase"/>
</dbReference>
<dbReference type="InterPro" id="IPR020565">
    <property type="entry name" value="ImidazoleglycerP_deHydtase_CS"/>
</dbReference>
<dbReference type="InterPro" id="IPR020568">
    <property type="entry name" value="Ribosomal_Su5_D2-typ_SF"/>
</dbReference>
<dbReference type="NCBIfam" id="NF002111">
    <property type="entry name" value="PRK00951.2-1"/>
    <property type="match status" value="1"/>
</dbReference>
<dbReference type="NCBIfam" id="NF002114">
    <property type="entry name" value="PRK00951.2-4"/>
    <property type="match status" value="1"/>
</dbReference>
<dbReference type="PANTHER" id="PTHR23133:SF2">
    <property type="entry name" value="IMIDAZOLEGLYCEROL-PHOSPHATE DEHYDRATASE"/>
    <property type="match status" value="1"/>
</dbReference>
<dbReference type="PANTHER" id="PTHR23133">
    <property type="entry name" value="IMIDAZOLEGLYCEROL-PHOSPHATE DEHYDRATASE HIS7"/>
    <property type="match status" value="1"/>
</dbReference>
<dbReference type="Pfam" id="PF00475">
    <property type="entry name" value="IGPD"/>
    <property type="match status" value="1"/>
</dbReference>
<dbReference type="SUPFAM" id="SSF54211">
    <property type="entry name" value="Ribosomal protein S5 domain 2-like"/>
    <property type="match status" value="2"/>
</dbReference>
<dbReference type="PROSITE" id="PS00954">
    <property type="entry name" value="IGP_DEHYDRATASE_1"/>
    <property type="match status" value="1"/>
</dbReference>
<dbReference type="PROSITE" id="PS00955">
    <property type="entry name" value="IGP_DEHYDRATASE_2"/>
    <property type="match status" value="1"/>
</dbReference>
<proteinExistence type="inferred from homology"/>
<feature type="chain" id="PRO_1000057516" description="Imidazoleglycerol-phosphate dehydratase">
    <location>
        <begin position="1"/>
        <end position="190"/>
    </location>
</feature>